<comment type="function">
    <text evidence="1">The RecF protein is involved in DNA metabolism; it is required for DNA replication and normal SOS inducibility. RecF binds preferentially to single-stranded, linear DNA. It also seems to bind ATP.</text>
</comment>
<comment type="subcellular location">
    <subcellularLocation>
        <location evidence="1">Cytoplasm</location>
    </subcellularLocation>
</comment>
<comment type="similarity">
    <text evidence="1">Belongs to the RecF family.</text>
</comment>
<accession>Q12TC6</accession>
<evidence type="ECO:0000255" key="1">
    <source>
        <dbReference type="HAMAP-Rule" id="MF_00365"/>
    </source>
</evidence>
<proteinExistence type="inferred from homology"/>
<reference key="1">
    <citation type="submission" date="2006-03" db="EMBL/GenBank/DDBJ databases">
        <title>Complete sequence of Shewanella denitrificans OS217.</title>
        <authorList>
            <consortium name="US DOE Joint Genome Institute"/>
            <person name="Copeland A."/>
            <person name="Lucas S."/>
            <person name="Lapidus A."/>
            <person name="Barry K."/>
            <person name="Detter J.C."/>
            <person name="Glavina del Rio T."/>
            <person name="Hammon N."/>
            <person name="Israni S."/>
            <person name="Dalin E."/>
            <person name="Tice H."/>
            <person name="Pitluck S."/>
            <person name="Brettin T."/>
            <person name="Bruce D."/>
            <person name="Han C."/>
            <person name="Tapia R."/>
            <person name="Gilna P."/>
            <person name="Kiss H."/>
            <person name="Schmutz J."/>
            <person name="Larimer F."/>
            <person name="Land M."/>
            <person name="Hauser L."/>
            <person name="Kyrpides N."/>
            <person name="Lykidis A."/>
            <person name="Richardson P."/>
        </authorList>
    </citation>
    <scope>NUCLEOTIDE SEQUENCE [LARGE SCALE GENOMIC DNA]</scope>
    <source>
        <strain>OS217 / ATCC BAA-1090 / DSM 15013</strain>
    </source>
</reference>
<sequence length="360" mass="40708">MSLQRISIESFRNIAAANLLPSEGLNLIYGHNGSGKTSVLEAIYFLGMGRSFRSHLSQRVIRHDEDKLTLFAQLSHHNGESKVGLRRHRNGEIEVKIDGDRVKRLSTLAETLPIQVITPESFSLLFEGPKARRQFVDWGAFHSDEQFYTAWSNVKRILKQRNQLLRNGSSYGNILFWDKELVRYAEQVTQIRNHYVDSLNELLKGIIEEFLPQVNISISFTRGWDSKTDLALLLESQYSRDLATGHTVSGPHKADLRLRVGNLPVQDALSRGQLKLLVCALRIAQGKLLKQQKDKQSIYLVDDLPSELDAQHRQLLLKQLTETGAQIFVTAIEPAAIVDSLASPPNKVFHVEQGRVTVIE</sequence>
<protein>
    <recommendedName>
        <fullName evidence="1">DNA replication and repair protein RecF</fullName>
    </recommendedName>
</protein>
<feature type="chain" id="PRO_1000048572" description="DNA replication and repair protein RecF">
    <location>
        <begin position="1"/>
        <end position="360"/>
    </location>
</feature>
<feature type="binding site" evidence="1">
    <location>
        <begin position="30"/>
        <end position="37"/>
    </location>
    <ligand>
        <name>ATP</name>
        <dbReference type="ChEBI" id="CHEBI:30616"/>
    </ligand>
</feature>
<name>RECF_SHEDO</name>
<dbReference type="EMBL" id="CP000302">
    <property type="protein sequence ID" value="ABE53300.1"/>
    <property type="molecule type" value="Genomic_DNA"/>
</dbReference>
<dbReference type="RefSeq" id="WP_011494469.1">
    <property type="nucleotide sequence ID" value="NC_007954.1"/>
</dbReference>
<dbReference type="SMR" id="Q12TC6"/>
<dbReference type="STRING" id="318161.Sden_0003"/>
<dbReference type="KEGG" id="sdn:Sden_0003"/>
<dbReference type="eggNOG" id="COG1195">
    <property type="taxonomic scope" value="Bacteria"/>
</dbReference>
<dbReference type="HOGENOM" id="CLU_040267_0_0_6"/>
<dbReference type="OrthoDB" id="9803889at2"/>
<dbReference type="Proteomes" id="UP000001982">
    <property type="component" value="Chromosome"/>
</dbReference>
<dbReference type="GO" id="GO:0005737">
    <property type="term" value="C:cytoplasm"/>
    <property type="evidence" value="ECO:0007669"/>
    <property type="project" value="UniProtKB-SubCell"/>
</dbReference>
<dbReference type="GO" id="GO:0005524">
    <property type="term" value="F:ATP binding"/>
    <property type="evidence" value="ECO:0007669"/>
    <property type="project" value="UniProtKB-UniRule"/>
</dbReference>
<dbReference type="GO" id="GO:0003697">
    <property type="term" value="F:single-stranded DNA binding"/>
    <property type="evidence" value="ECO:0007669"/>
    <property type="project" value="UniProtKB-UniRule"/>
</dbReference>
<dbReference type="GO" id="GO:0006260">
    <property type="term" value="P:DNA replication"/>
    <property type="evidence" value="ECO:0007669"/>
    <property type="project" value="UniProtKB-UniRule"/>
</dbReference>
<dbReference type="GO" id="GO:0000731">
    <property type="term" value="P:DNA synthesis involved in DNA repair"/>
    <property type="evidence" value="ECO:0007669"/>
    <property type="project" value="TreeGrafter"/>
</dbReference>
<dbReference type="GO" id="GO:0006302">
    <property type="term" value="P:double-strand break repair"/>
    <property type="evidence" value="ECO:0007669"/>
    <property type="project" value="TreeGrafter"/>
</dbReference>
<dbReference type="GO" id="GO:0009432">
    <property type="term" value="P:SOS response"/>
    <property type="evidence" value="ECO:0007669"/>
    <property type="project" value="UniProtKB-UniRule"/>
</dbReference>
<dbReference type="Gene3D" id="3.40.50.300">
    <property type="entry name" value="P-loop containing nucleotide triphosphate hydrolases"/>
    <property type="match status" value="1"/>
</dbReference>
<dbReference type="Gene3D" id="1.20.1050.90">
    <property type="entry name" value="RecF/RecN/SMC, N-terminal domain"/>
    <property type="match status" value="1"/>
</dbReference>
<dbReference type="HAMAP" id="MF_00365">
    <property type="entry name" value="RecF"/>
    <property type="match status" value="1"/>
</dbReference>
<dbReference type="InterPro" id="IPR001238">
    <property type="entry name" value="DNA-binding_RecF"/>
</dbReference>
<dbReference type="InterPro" id="IPR018078">
    <property type="entry name" value="DNA-binding_RecF_CS"/>
</dbReference>
<dbReference type="InterPro" id="IPR027417">
    <property type="entry name" value="P-loop_NTPase"/>
</dbReference>
<dbReference type="InterPro" id="IPR003395">
    <property type="entry name" value="RecF/RecN/SMC_N"/>
</dbReference>
<dbReference type="InterPro" id="IPR042174">
    <property type="entry name" value="RecF_2"/>
</dbReference>
<dbReference type="NCBIfam" id="TIGR00611">
    <property type="entry name" value="recf"/>
    <property type="match status" value="1"/>
</dbReference>
<dbReference type="PANTHER" id="PTHR32182">
    <property type="entry name" value="DNA REPLICATION AND REPAIR PROTEIN RECF"/>
    <property type="match status" value="1"/>
</dbReference>
<dbReference type="PANTHER" id="PTHR32182:SF0">
    <property type="entry name" value="DNA REPLICATION AND REPAIR PROTEIN RECF"/>
    <property type="match status" value="1"/>
</dbReference>
<dbReference type="Pfam" id="PF02463">
    <property type="entry name" value="SMC_N"/>
    <property type="match status" value="1"/>
</dbReference>
<dbReference type="SUPFAM" id="SSF52540">
    <property type="entry name" value="P-loop containing nucleoside triphosphate hydrolases"/>
    <property type="match status" value="1"/>
</dbReference>
<dbReference type="PROSITE" id="PS00617">
    <property type="entry name" value="RECF_1"/>
    <property type="match status" value="1"/>
</dbReference>
<dbReference type="PROSITE" id="PS00618">
    <property type="entry name" value="RECF_2"/>
    <property type="match status" value="1"/>
</dbReference>
<keyword id="KW-0067">ATP-binding</keyword>
<keyword id="KW-0963">Cytoplasm</keyword>
<keyword id="KW-0227">DNA damage</keyword>
<keyword id="KW-0234">DNA repair</keyword>
<keyword id="KW-0235">DNA replication</keyword>
<keyword id="KW-0238">DNA-binding</keyword>
<keyword id="KW-0547">Nucleotide-binding</keyword>
<keyword id="KW-1185">Reference proteome</keyword>
<keyword id="KW-0742">SOS response</keyword>
<gene>
    <name evidence="1" type="primary">recF</name>
    <name type="ordered locus">Sden_0003</name>
</gene>
<organism>
    <name type="scientific">Shewanella denitrificans (strain OS217 / ATCC BAA-1090 / DSM 15013)</name>
    <dbReference type="NCBI Taxonomy" id="318161"/>
    <lineage>
        <taxon>Bacteria</taxon>
        <taxon>Pseudomonadati</taxon>
        <taxon>Pseudomonadota</taxon>
        <taxon>Gammaproteobacteria</taxon>
        <taxon>Alteromonadales</taxon>
        <taxon>Shewanellaceae</taxon>
        <taxon>Shewanella</taxon>
    </lineage>
</organism>